<evidence type="ECO:0000255" key="1">
    <source>
        <dbReference type="HAMAP-Rule" id="MF_00659"/>
    </source>
</evidence>
<name>Y104_BORPE</name>
<accession>Q7W0L0</accession>
<proteinExistence type="inferred from homology"/>
<gene>
    <name type="ordered locus">BP0104</name>
</gene>
<keyword id="KW-1185">Reference proteome</keyword>
<sequence>MHNIPPEESLIEYPSDFPIKVMGKQHPEFAQTLTEVVLQFDPGFDPASVEMRPSKGGNYLGLTFTVRATSREQLDSLYRALHGHPMVSIVL</sequence>
<protein>
    <recommendedName>
        <fullName evidence="1">UPF0250 protein BP0104</fullName>
    </recommendedName>
</protein>
<feature type="chain" id="PRO_0000209291" description="UPF0250 protein BP0104">
    <location>
        <begin position="1"/>
        <end position="91"/>
    </location>
</feature>
<organism>
    <name type="scientific">Bordetella pertussis (strain Tohama I / ATCC BAA-589 / NCTC 13251)</name>
    <dbReference type="NCBI Taxonomy" id="257313"/>
    <lineage>
        <taxon>Bacteria</taxon>
        <taxon>Pseudomonadati</taxon>
        <taxon>Pseudomonadota</taxon>
        <taxon>Betaproteobacteria</taxon>
        <taxon>Burkholderiales</taxon>
        <taxon>Alcaligenaceae</taxon>
        <taxon>Bordetella</taxon>
    </lineage>
</organism>
<comment type="similarity">
    <text evidence="1">Belongs to the UPF0250 family.</text>
</comment>
<dbReference type="EMBL" id="BX640411">
    <property type="protein sequence ID" value="CAE40484.1"/>
    <property type="molecule type" value="Genomic_DNA"/>
</dbReference>
<dbReference type="RefSeq" id="NP_879007.1">
    <property type="nucleotide sequence ID" value="NC_002929.2"/>
</dbReference>
<dbReference type="RefSeq" id="WP_003818417.1">
    <property type="nucleotide sequence ID" value="NZ_CP039022.1"/>
</dbReference>
<dbReference type="SMR" id="Q7W0L0"/>
<dbReference type="STRING" id="257313.BP0104"/>
<dbReference type="PaxDb" id="257313-BP0104"/>
<dbReference type="KEGG" id="bpe:BP0104"/>
<dbReference type="PATRIC" id="fig|257313.5.peg.105"/>
<dbReference type="eggNOG" id="COG2921">
    <property type="taxonomic scope" value="Bacteria"/>
</dbReference>
<dbReference type="HOGENOM" id="CLU_161438_1_2_4"/>
<dbReference type="Proteomes" id="UP000002676">
    <property type="component" value="Chromosome"/>
</dbReference>
<dbReference type="Gene3D" id="3.30.70.260">
    <property type="match status" value="1"/>
</dbReference>
<dbReference type="HAMAP" id="MF_00659">
    <property type="entry name" value="UPF0250"/>
    <property type="match status" value="1"/>
</dbReference>
<dbReference type="InterPro" id="IPR007454">
    <property type="entry name" value="UPF0250_YbeD-like"/>
</dbReference>
<dbReference type="InterPro" id="IPR027471">
    <property type="entry name" value="YbeD-like_sf"/>
</dbReference>
<dbReference type="NCBIfam" id="NF002533">
    <property type="entry name" value="PRK02047.1"/>
    <property type="match status" value="1"/>
</dbReference>
<dbReference type="PANTHER" id="PTHR38036">
    <property type="entry name" value="UPF0250 PROTEIN YBED"/>
    <property type="match status" value="1"/>
</dbReference>
<dbReference type="PANTHER" id="PTHR38036:SF1">
    <property type="entry name" value="UPF0250 PROTEIN YBED"/>
    <property type="match status" value="1"/>
</dbReference>
<dbReference type="Pfam" id="PF04359">
    <property type="entry name" value="DUF493"/>
    <property type="match status" value="1"/>
</dbReference>
<dbReference type="SUPFAM" id="SSF117991">
    <property type="entry name" value="YbeD/HP0495-like"/>
    <property type="match status" value="1"/>
</dbReference>
<reference key="1">
    <citation type="journal article" date="2003" name="Nat. Genet.">
        <title>Comparative analysis of the genome sequences of Bordetella pertussis, Bordetella parapertussis and Bordetella bronchiseptica.</title>
        <authorList>
            <person name="Parkhill J."/>
            <person name="Sebaihia M."/>
            <person name="Preston A."/>
            <person name="Murphy L.D."/>
            <person name="Thomson N.R."/>
            <person name="Harris D.E."/>
            <person name="Holden M.T.G."/>
            <person name="Churcher C.M."/>
            <person name="Bentley S.D."/>
            <person name="Mungall K.L."/>
            <person name="Cerdeno-Tarraga A.-M."/>
            <person name="Temple L."/>
            <person name="James K.D."/>
            <person name="Harris B."/>
            <person name="Quail M.A."/>
            <person name="Achtman M."/>
            <person name="Atkin R."/>
            <person name="Baker S."/>
            <person name="Basham D."/>
            <person name="Bason N."/>
            <person name="Cherevach I."/>
            <person name="Chillingworth T."/>
            <person name="Collins M."/>
            <person name="Cronin A."/>
            <person name="Davis P."/>
            <person name="Doggett J."/>
            <person name="Feltwell T."/>
            <person name="Goble A."/>
            <person name="Hamlin N."/>
            <person name="Hauser H."/>
            <person name="Holroyd S."/>
            <person name="Jagels K."/>
            <person name="Leather S."/>
            <person name="Moule S."/>
            <person name="Norberczak H."/>
            <person name="O'Neil S."/>
            <person name="Ormond D."/>
            <person name="Price C."/>
            <person name="Rabbinowitsch E."/>
            <person name="Rutter S."/>
            <person name="Sanders M."/>
            <person name="Saunders D."/>
            <person name="Seeger K."/>
            <person name="Sharp S."/>
            <person name="Simmonds M."/>
            <person name="Skelton J."/>
            <person name="Squares R."/>
            <person name="Squares S."/>
            <person name="Stevens K."/>
            <person name="Unwin L."/>
            <person name="Whitehead S."/>
            <person name="Barrell B.G."/>
            <person name="Maskell D.J."/>
        </authorList>
    </citation>
    <scope>NUCLEOTIDE SEQUENCE [LARGE SCALE GENOMIC DNA]</scope>
    <source>
        <strain>Tohama I / ATCC BAA-589 / NCTC 13251</strain>
    </source>
</reference>